<keyword id="KW-0106">Calcium</keyword>
<keyword id="KW-0109">Calcium transport</keyword>
<keyword id="KW-1003">Cell membrane</keyword>
<keyword id="KW-0406">Ion transport</keyword>
<keyword id="KW-0472">Membrane</keyword>
<keyword id="KW-1185">Reference proteome</keyword>
<keyword id="KW-0812">Transmembrane</keyword>
<keyword id="KW-1133">Transmembrane helix</keyword>
<keyword id="KW-0813">Transport</keyword>
<comment type="function">
    <text evidence="3">Solute carrier protein that negatively regulates the cytosolic homeostasis in response to high levels of extracellular calcium.</text>
</comment>
<comment type="subcellular location">
    <subcellularLocation>
        <location evidence="3">Cell membrane</location>
        <topology evidence="3">Multi-pass membrane protein</topology>
    </subcellularLocation>
    <subcellularLocation>
        <location evidence="3">Bud neck</location>
    </subcellularLocation>
    <text evidence="1">Distributes as multiple foci in the plasma membrane prior to cell division, moves toward and concentrates at the bud neck as the bud grows in size, and disperses again along the plasma membrane immediately prior to cytokinesis.</text>
</comment>
<comment type="disruption phenotype">
    <text evidence="3">Leads to modest tolerance to azoles and terbinafine, but not to amphotericin B and nystatin (PubMed:22530691). Elevates the intracellular Ca(2+) and leads to the activation of the calcium/calcineurin signaling pathway (PubMed:22530691).</text>
</comment>
<comment type="similarity">
    <text evidence="5">Belongs to the bile acid:sodium symporter (BASS) (TC 2.A.28) family.</text>
</comment>
<organism>
    <name type="scientific">Candida albicans (strain SC5314 / ATCC MYA-2876)</name>
    <name type="common">Yeast</name>
    <dbReference type="NCBI Taxonomy" id="237561"/>
    <lineage>
        <taxon>Eukaryota</taxon>
        <taxon>Fungi</taxon>
        <taxon>Dikarya</taxon>
        <taxon>Ascomycota</taxon>
        <taxon>Saccharomycotina</taxon>
        <taxon>Pichiomycetes</taxon>
        <taxon>Debaryomycetaceae</taxon>
        <taxon>Candida/Lodderomyces clade</taxon>
        <taxon>Candida</taxon>
    </lineage>
</organism>
<sequence length="411" mass="46095">MSLETFRESKAYKWTSKVISFLIGQWFFIFLGVFIALAHSYPEFAKQGGTIRAEYSIGYGAVAVIFLISGLSMSTKQLLVNVANWRAHFTVLSMSFLVTSAIIYGIASGIKASHNGQIDDWLLIGLIVTHACPTTVSSNVVMTKQAHGNDILTLCEVFIGNVLGAFITPALLQMYMRGTWEIGNPSHQTQGDSTVQELYAHTMKQLGLSVFVPLFVGQVVQNIFPKQTKWCLTTFKLNKVGSFMLLLIMFQSFSTAFAQHAFTSVSHASIIFLVFFNIGIYLFFTVLTFFYSRPFWILRVFKEEPNESSSKLYRYSYAFFRPFYYNRKDTVAVMLCGPAKTAALGVSLVSSQYGSHNPKLGIILVPLVLYQAEQVMTANVLVSFMRKWIHAEDKVPEDEETSVGSDNDPKK</sequence>
<accession>Q59UQ7</accession>
<reference key="1">
    <citation type="journal article" date="2004" name="Proc. Natl. Acad. Sci. U.S.A.">
        <title>The diploid genome sequence of Candida albicans.</title>
        <authorList>
            <person name="Jones T."/>
            <person name="Federspiel N.A."/>
            <person name="Chibana H."/>
            <person name="Dungan J."/>
            <person name="Kalman S."/>
            <person name="Magee B.B."/>
            <person name="Newport G."/>
            <person name="Thorstenson Y.R."/>
            <person name="Agabian N."/>
            <person name="Magee P.T."/>
            <person name="Davis R.W."/>
            <person name="Scherer S."/>
        </authorList>
    </citation>
    <scope>NUCLEOTIDE SEQUENCE [LARGE SCALE GENOMIC DNA]</scope>
    <source>
        <strain>SC5314 / ATCC MYA-2876</strain>
    </source>
</reference>
<reference key="2">
    <citation type="journal article" date="2007" name="Genome Biol.">
        <title>Assembly of the Candida albicans genome into sixteen supercontigs aligned on the eight chromosomes.</title>
        <authorList>
            <person name="van het Hoog M."/>
            <person name="Rast T.J."/>
            <person name="Martchenko M."/>
            <person name="Grindle S."/>
            <person name="Dignard D."/>
            <person name="Hogues H."/>
            <person name="Cuomo C."/>
            <person name="Berriman M."/>
            <person name="Scherer S."/>
            <person name="Magee B.B."/>
            <person name="Whiteway M."/>
            <person name="Chibana H."/>
            <person name="Nantel A."/>
            <person name="Magee P.T."/>
        </authorList>
    </citation>
    <scope>GENOME REANNOTATION</scope>
    <source>
        <strain>SC5314 / ATCC MYA-2876</strain>
    </source>
</reference>
<reference key="3">
    <citation type="journal article" date="2013" name="Genome Biol.">
        <title>Assembly of a phased diploid Candida albicans genome facilitates allele-specific measurements and provides a simple model for repeat and indel structure.</title>
        <authorList>
            <person name="Muzzey D."/>
            <person name="Schwartz K."/>
            <person name="Weissman J.S."/>
            <person name="Sherlock G."/>
        </authorList>
    </citation>
    <scope>NUCLEOTIDE SEQUENCE [LARGE SCALE GENOMIC DNA]</scope>
    <scope>GENOME REANNOTATION</scope>
    <source>
        <strain>SC5314 / ATCC MYA-2876</strain>
    </source>
</reference>
<reference key="4">
    <citation type="journal article" date="2012" name="Biochem. J.">
        <title>The Candida albicans plasma membrane protein Rch1p, a member of the vertebrate SLC10 carrier family, is a novel regulator of cytosolic Ca2+ homoeostasis.</title>
        <authorList>
            <person name="Jiang L."/>
            <person name="Alber J."/>
            <person name="Wang J."/>
            <person name="Du W."/>
            <person name="Yang X."/>
            <person name="Li X."/>
            <person name="Sanglard D."/>
            <person name="Geyer J."/>
        </authorList>
    </citation>
    <scope>DISRUPTION PHENOTYPE</scope>
    <scope>SUBCELLULAR LOCATION</scope>
    <scope>FUNCTION</scope>
</reference>
<proteinExistence type="inferred from homology"/>
<feature type="chain" id="PRO_0000448612" description="Solute carrier RCH1">
    <location>
        <begin position="1"/>
        <end position="411"/>
    </location>
</feature>
<feature type="topological domain" description="Cytoplasmic" evidence="5">
    <location>
        <begin position="1"/>
        <end position="17"/>
    </location>
</feature>
<feature type="transmembrane region" description="Helical" evidence="2">
    <location>
        <begin position="18"/>
        <end position="38"/>
    </location>
</feature>
<feature type="topological domain" description="Extracellular" evidence="5">
    <location>
        <begin position="39"/>
        <end position="52"/>
    </location>
</feature>
<feature type="transmembrane region" description="Helical" evidence="2">
    <location>
        <begin position="53"/>
        <end position="73"/>
    </location>
</feature>
<feature type="topological domain" description="Cytoplasmic" evidence="5">
    <location>
        <begin position="74"/>
        <end position="89"/>
    </location>
</feature>
<feature type="transmembrane region" description="Helical" evidence="2">
    <location>
        <begin position="90"/>
        <end position="110"/>
    </location>
</feature>
<feature type="topological domain" description="Extracellular" evidence="5">
    <location>
        <begin position="111"/>
        <end position="120"/>
    </location>
</feature>
<feature type="transmembrane region" description="Helical" evidence="2">
    <location>
        <begin position="121"/>
        <end position="141"/>
    </location>
</feature>
<feature type="topological domain" description="Cytoplasmic" evidence="5">
    <location>
        <begin position="142"/>
        <end position="150"/>
    </location>
</feature>
<feature type="transmembrane region" description="Helical" evidence="2">
    <location>
        <begin position="151"/>
        <end position="171"/>
    </location>
</feature>
<feature type="topological domain" description="Extracellular" evidence="5">
    <location>
        <begin position="172"/>
        <end position="204"/>
    </location>
</feature>
<feature type="transmembrane region" description="Helical" evidence="2">
    <location>
        <begin position="205"/>
        <end position="225"/>
    </location>
</feature>
<feature type="topological domain" description="Cytoplasmic" evidence="5">
    <location>
        <begin position="226"/>
        <end position="242"/>
    </location>
</feature>
<feature type="transmembrane region" description="Helical" evidence="2">
    <location>
        <begin position="243"/>
        <end position="263"/>
    </location>
</feature>
<feature type="topological domain" description="Extracellular" evidence="5">
    <location>
        <begin position="264"/>
        <end position="269"/>
    </location>
</feature>
<feature type="transmembrane region" description="Helical" evidence="2">
    <location>
        <begin position="270"/>
        <end position="290"/>
    </location>
</feature>
<feature type="topological domain" description="Cytoplasmic" evidence="5">
    <location>
        <begin position="291"/>
        <end position="329"/>
    </location>
</feature>
<feature type="transmembrane region" description="Helical" evidence="2">
    <location>
        <begin position="330"/>
        <end position="350"/>
    </location>
</feature>
<feature type="topological domain" description="Extracellular" evidence="5">
    <location>
        <begin position="351"/>
        <end position="361"/>
    </location>
</feature>
<feature type="transmembrane region" description="Helical" evidence="2">
    <location>
        <begin position="362"/>
        <end position="382"/>
    </location>
</feature>
<feature type="topological domain" description="Cytoplasmic" evidence="5">
    <location>
        <begin position="383"/>
        <end position="411"/>
    </location>
</feature>
<dbReference type="EMBL" id="CP017626">
    <property type="protein sequence ID" value="AOW28829.1"/>
    <property type="molecule type" value="Genomic_DNA"/>
</dbReference>
<dbReference type="RefSeq" id="XP_713344.1">
    <property type="nucleotide sequence ID" value="XM_708251.1"/>
</dbReference>
<dbReference type="FunCoup" id="Q59UQ7">
    <property type="interactions" value="447"/>
</dbReference>
<dbReference type="STRING" id="237561.Q59UQ7"/>
<dbReference type="TCDB" id="2.A.28.3.7">
    <property type="family name" value="the bile acid:na(+) symporter (bass) family"/>
</dbReference>
<dbReference type="EnsemblFungi" id="C4_00360C_A-T">
    <property type="protein sequence ID" value="C4_00360C_A-T-p1"/>
    <property type="gene ID" value="C4_00360C_A"/>
</dbReference>
<dbReference type="GeneID" id="3645002"/>
<dbReference type="KEGG" id="cal:CAALFM_C400360CA"/>
<dbReference type="CGD" id="CAL0000187136">
    <property type="gene designation" value="RCH1"/>
</dbReference>
<dbReference type="VEuPathDB" id="FungiDB:C4_00360C_A"/>
<dbReference type="eggNOG" id="KOG4821">
    <property type="taxonomic scope" value="Eukaryota"/>
</dbReference>
<dbReference type="HOGENOM" id="CLU_039013_3_0_1"/>
<dbReference type="InParanoid" id="Q59UQ7"/>
<dbReference type="OMA" id="LPIMIYH"/>
<dbReference type="OrthoDB" id="188035at2759"/>
<dbReference type="Proteomes" id="UP000000559">
    <property type="component" value="Chromosome 4"/>
</dbReference>
<dbReference type="GO" id="GO:0005935">
    <property type="term" value="C:cellular bud neck"/>
    <property type="evidence" value="ECO:0007669"/>
    <property type="project" value="UniProtKB-SubCell"/>
</dbReference>
<dbReference type="GO" id="GO:0005886">
    <property type="term" value="C:plasma membrane"/>
    <property type="evidence" value="ECO:0000314"/>
    <property type="project" value="CGD"/>
</dbReference>
<dbReference type="GO" id="GO:0070509">
    <property type="term" value="P:calcium ion import"/>
    <property type="evidence" value="ECO:0000315"/>
    <property type="project" value="CGD"/>
</dbReference>
<dbReference type="GO" id="GO:0051481">
    <property type="term" value="P:negative regulation of cytosolic calcium ion concentration"/>
    <property type="evidence" value="ECO:0007669"/>
    <property type="project" value="EnsemblFungi"/>
</dbReference>
<dbReference type="Gene3D" id="1.20.1530.20">
    <property type="match status" value="1"/>
</dbReference>
<dbReference type="InterPro" id="IPR038770">
    <property type="entry name" value="Na+/solute_symporter_sf"/>
</dbReference>
<dbReference type="InterPro" id="IPR016833">
    <property type="entry name" value="Put_Na-Bile_cotransptr"/>
</dbReference>
<dbReference type="PANTHER" id="PTHR18640:SF5">
    <property type="entry name" value="SODIUM_BILE ACID COTRANSPORTER 7"/>
    <property type="match status" value="1"/>
</dbReference>
<dbReference type="PANTHER" id="PTHR18640">
    <property type="entry name" value="SOLUTE CARRIER FAMILY 10 MEMBER 7"/>
    <property type="match status" value="1"/>
</dbReference>
<dbReference type="Pfam" id="PF13593">
    <property type="entry name" value="SBF_like"/>
    <property type="match status" value="1"/>
</dbReference>
<dbReference type="PIRSF" id="PIRSF026166">
    <property type="entry name" value="UCP026166"/>
    <property type="match status" value="1"/>
</dbReference>
<name>RCH1_CANAL</name>
<evidence type="ECO:0000250" key="1">
    <source>
        <dbReference type="UniProtKB" id="Q05131"/>
    </source>
</evidence>
<evidence type="ECO:0000255" key="2"/>
<evidence type="ECO:0000269" key="3">
    <source>
    </source>
</evidence>
<evidence type="ECO:0000303" key="4">
    <source>
    </source>
</evidence>
<evidence type="ECO:0000305" key="5"/>
<protein>
    <recommendedName>
        <fullName evidence="4">Solute carrier RCH1</fullName>
    </recommendedName>
    <alternativeName>
        <fullName evidence="4">Regulator of calcium homeostasis 1</fullName>
    </alternativeName>
</protein>
<gene>
    <name evidence="4" type="primary">RCH1</name>
    <name type="ordered locus">CAALFM_C400360CA</name>
    <name type="ORF">orf19.5663</name>
</gene>